<proteinExistence type="inferred from homology"/>
<evidence type="ECO:0000255" key="1">
    <source>
        <dbReference type="HAMAP-Rule" id="MF_01452"/>
    </source>
</evidence>
<comment type="function">
    <text evidence="1">The heterodimer acts as both an ATP-dependent DNA helicase and an ATP-dependent, dual-direction single-stranded exonuclease. Recognizes the chi site generating a DNA molecule suitable for the initiation of homologous recombination. The AddB subunit has 5' -&gt; 3' nuclease activity but not helicase activity.</text>
</comment>
<comment type="cofactor">
    <cofactor evidence="1">
        <name>Mg(2+)</name>
        <dbReference type="ChEBI" id="CHEBI:18420"/>
    </cofactor>
</comment>
<comment type="cofactor">
    <cofactor evidence="1">
        <name>[4Fe-4S] cluster</name>
        <dbReference type="ChEBI" id="CHEBI:49883"/>
    </cofactor>
    <text evidence="1">Binds 1 [4Fe-4S] cluster.</text>
</comment>
<comment type="subunit">
    <text evidence="1">Heterodimer of AddA and AddB.</text>
</comment>
<comment type="miscellaneous">
    <text evidence="1">Despite having conserved helicase domains, this subunit does not have helicase activity.</text>
</comment>
<comment type="similarity">
    <text evidence="1">Belongs to the helicase family. AddB/RexB type 1 subfamily.</text>
</comment>
<name>ADDB_ALKOO</name>
<organism>
    <name type="scientific">Alkaliphilus oremlandii (strain OhILAs)</name>
    <name type="common">Clostridium oremlandii (strain OhILAs)</name>
    <dbReference type="NCBI Taxonomy" id="350688"/>
    <lineage>
        <taxon>Bacteria</taxon>
        <taxon>Bacillati</taxon>
        <taxon>Bacillota</taxon>
        <taxon>Clostridia</taxon>
        <taxon>Peptostreptococcales</taxon>
        <taxon>Natronincolaceae</taxon>
        <taxon>Alkaliphilus</taxon>
    </lineage>
</organism>
<keyword id="KW-0004">4Fe-4S</keyword>
<keyword id="KW-0067">ATP-binding</keyword>
<keyword id="KW-0227">DNA damage</keyword>
<keyword id="KW-0234">DNA repair</keyword>
<keyword id="KW-0238">DNA-binding</keyword>
<keyword id="KW-0269">Exonuclease</keyword>
<keyword id="KW-0347">Helicase</keyword>
<keyword id="KW-0378">Hydrolase</keyword>
<keyword id="KW-0408">Iron</keyword>
<keyword id="KW-0411">Iron-sulfur</keyword>
<keyword id="KW-0479">Metal-binding</keyword>
<keyword id="KW-0540">Nuclease</keyword>
<keyword id="KW-0547">Nucleotide-binding</keyword>
<keyword id="KW-1185">Reference proteome</keyword>
<reference key="1">
    <citation type="submission" date="2007-10" db="EMBL/GenBank/DDBJ databases">
        <title>Complete genome of Alkaliphilus oremlandii OhILAs.</title>
        <authorList>
            <person name="Copeland A."/>
            <person name="Lucas S."/>
            <person name="Lapidus A."/>
            <person name="Barry K."/>
            <person name="Detter J.C."/>
            <person name="Glavina del Rio T."/>
            <person name="Hammon N."/>
            <person name="Israni S."/>
            <person name="Dalin E."/>
            <person name="Tice H."/>
            <person name="Pitluck S."/>
            <person name="Chain P."/>
            <person name="Malfatti S."/>
            <person name="Shin M."/>
            <person name="Vergez L."/>
            <person name="Schmutz J."/>
            <person name="Larimer F."/>
            <person name="Land M."/>
            <person name="Hauser L."/>
            <person name="Kyrpides N."/>
            <person name="Mikhailova N."/>
            <person name="Stolz J.F."/>
            <person name="Dawson A."/>
            <person name="Fisher E."/>
            <person name="Crable B."/>
            <person name="Perera E."/>
            <person name="Lisak J."/>
            <person name="Ranganathan M."/>
            <person name="Basu P."/>
            <person name="Richardson P."/>
        </authorList>
    </citation>
    <scope>NUCLEOTIDE SEQUENCE [LARGE SCALE GENOMIC DNA]</scope>
    <source>
        <strain>OhILAs</strain>
    </source>
</reference>
<sequence>MAIRYVFGRAGRGKSYFVLEEIKKRLEGEGHHKLFLLVPEQFTLQAERDLIGKQALKGIMRAEVLSFTRLTHYVFNEVGGITKIPINEIGKNMILRKIADESSKDLSIYKSIAKQEGFITKLNDLICEMKQHDITPIELTMEFNEMEEDTLLKRKLNDIILLYQKFNNYLRDRYVDNEDNVNLLIENIEKVQFLEGAEVWIDGFQSFTPQIFRVIEKLAEKVKNLTITFTMELKSKESDQDLFHINRKTYLKIKSIAQRLGLEEEIIDLDRNERPVLPKVQEICHIEKELYAYPYQQYTGEITHLDVFSGSNLYTEMENVAAQIIHLVRDKGYRWKDIALVSAGLEEYSMILKRVFEEYSIPYFMDEKRSIMNNPIVELILSSIGILARGYQYEDVFRFLKTGFGDLNKDEVEELENYVLQYGIKGKDYAVPFTKGFTNKKHEEIEQEESDEIHEEKIKYNEFRERFIAPFLKFEKKIYRKKKVGHITKALFEFMKDLNIEAKLDQWIEELREKKYFEYVNENTQIWNKVMEILDQLTEILAEESTTLKEYGRILEAGFLACEVGVIPTTIDQVLVGSIERSKSHDIKALFVIGVNDGILPSSREDGGILLDHERESLDKKGLSIGNTLENALLEEQFTIYSALSKPTEYLWISYALADQEGKAQRQSILIDRIKKLFRNLNIQSDVVPTLNRQLHLITTPISTFKYMTESIRQNIDDKPMEDIWWDVYQWYSNESQWDERRNLMVKGLFHENQISYIGEQKARSLYEHPIKSSVSRLERFANCPFSHFVTYGLRPKERKEYQLSNPDIGRLFHDSMENFTKELVNEQIQWKDLTREQSDYFVEKVIDEMVPEFEHGIMLSTHRYQYLVTRLKRISKRAMWTLTEHIKKGQFVPMGHEIIFGLEGDIPPIVIELESGEKIYLEGRIDRVDILNDEDGNYVKIIDYKSGSKEFSLSDVYYGFQIQLLVYLDAVLSSQSQKYQAEVHPGGIFYFKIDDPMVKTTEKAVKEVEKEINKRLKMKGLVLKDVNIIKKIDEDIGRSSSILPASLTKEGEISKTSSALPEEDFKALLKHVRGLVKEIGEEMLKGNVKIEPFKKGGDTSCKYCAYISICQFDHSFHENQYKTIKELKNEEVLEKIRKENENI</sequence>
<dbReference type="EC" id="3.1.-.-" evidence="1"/>
<dbReference type="EMBL" id="CP000853">
    <property type="protein sequence ID" value="ABW19833.1"/>
    <property type="molecule type" value="Genomic_DNA"/>
</dbReference>
<dbReference type="RefSeq" id="WP_012160140.1">
    <property type="nucleotide sequence ID" value="NC_009922.1"/>
</dbReference>
<dbReference type="SMR" id="A8MJ51"/>
<dbReference type="STRING" id="350688.Clos_2300"/>
<dbReference type="KEGG" id="aoe:Clos_2300"/>
<dbReference type="eggNOG" id="COG3857">
    <property type="taxonomic scope" value="Bacteria"/>
</dbReference>
<dbReference type="HOGENOM" id="CLU_007838_0_0_9"/>
<dbReference type="OrthoDB" id="9758506at2"/>
<dbReference type="Proteomes" id="UP000000269">
    <property type="component" value="Chromosome"/>
</dbReference>
<dbReference type="GO" id="GO:0051539">
    <property type="term" value="F:4 iron, 4 sulfur cluster binding"/>
    <property type="evidence" value="ECO:0007669"/>
    <property type="project" value="UniProtKB-KW"/>
</dbReference>
<dbReference type="GO" id="GO:0008409">
    <property type="term" value="F:5'-3' exonuclease activity"/>
    <property type="evidence" value="ECO:0007669"/>
    <property type="project" value="UniProtKB-UniRule"/>
</dbReference>
<dbReference type="GO" id="GO:0005524">
    <property type="term" value="F:ATP binding"/>
    <property type="evidence" value="ECO:0007669"/>
    <property type="project" value="UniProtKB-UniRule"/>
</dbReference>
<dbReference type="GO" id="GO:0003690">
    <property type="term" value="F:double-stranded DNA binding"/>
    <property type="evidence" value="ECO:0007669"/>
    <property type="project" value="UniProtKB-UniRule"/>
</dbReference>
<dbReference type="GO" id="GO:0004386">
    <property type="term" value="F:helicase activity"/>
    <property type="evidence" value="ECO:0007669"/>
    <property type="project" value="UniProtKB-KW"/>
</dbReference>
<dbReference type="GO" id="GO:0046872">
    <property type="term" value="F:metal ion binding"/>
    <property type="evidence" value="ECO:0007669"/>
    <property type="project" value="UniProtKB-KW"/>
</dbReference>
<dbReference type="GO" id="GO:0000724">
    <property type="term" value="P:double-strand break repair via homologous recombination"/>
    <property type="evidence" value="ECO:0007669"/>
    <property type="project" value="UniProtKB-UniRule"/>
</dbReference>
<dbReference type="Gene3D" id="3.90.320.10">
    <property type="match status" value="1"/>
</dbReference>
<dbReference type="Gene3D" id="6.10.140.1030">
    <property type="match status" value="1"/>
</dbReference>
<dbReference type="Gene3D" id="3.40.50.300">
    <property type="entry name" value="P-loop containing nucleotide triphosphate hydrolases"/>
    <property type="match status" value="4"/>
</dbReference>
<dbReference type="HAMAP" id="MF_01452">
    <property type="entry name" value="AddB_type1"/>
    <property type="match status" value="1"/>
</dbReference>
<dbReference type="InterPro" id="IPR049035">
    <property type="entry name" value="ADDB_N"/>
</dbReference>
<dbReference type="InterPro" id="IPR014140">
    <property type="entry name" value="DNA_helicase_suAddB"/>
</dbReference>
<dbReference type="InterPro" id="IPR014017">
    <property type="entry name" value="DNA_helicase_UvrD-like_C"/>
</dbReference>
<dbReference type="InterPro" id="IPR027417">
    <property type="entry name" value="P-loop_NTPase"/>
</dbReference>
<dbReference type="InterPro" id="IPR011604">
    <property type="entry name" value="PDDEXK-like_dom_sf"/>
</dbReference>
<dbReference type="InterPro" id="IPR038726">
    <property type="entry name" value="PDDEXK_AddAB-type"/>
</dbReference>
<dbReference type="InterPro" id="IPR011335">
    <property type="entry name" value="Restrct_endonuc-II-like"/>
</dbReference>
<dbReference type="NCBIfam" id="TIGR02773">
    <property type="entry name" value="addB_Gpos"/>
    <property type="match status" value="1"/>
</dbReference>
<dbReference type="PANTHER" id="PTHR30591">
    <property type="entry name" value="RECBCD ENZYME SUBUNIT RECC"/>
    <property type="match status" value="1"/>
</dbReference>
<dbReference type="PANTHER" id="PTHR30591:SF1">
    <property type="entry name" value="RECBCD ENZYME SUBUNIT RECC"/>
    <property type="match status" value="1"/>
</dbReference>
<dbReference type="Pfam" id="PF21445">
    <property type="entry name" value="ADDB_N"/>
    <property type="match status" value="1"/>
</dbReference>
<dbReference type="Pfam" id="PF12705">
    <property type="entry name" value="PDDEXK_1"/>
    <property type="match status" value="1"/>
</dbReference>
<dbReference type="SUPFAM" id="SSF52540">
    <property type="entry name" value="P-loop containing nucleoside triphosphate hydrolases"/>
    <property type="match status" value="1"/>
</dbReference>
<dbReference type="SUPFAM" id="SSF52980">
    <property type="entry name" value="Restriction endonuclease-like"/>
    <property type="match status" value="1"/>
</dbReference>
<dbReference type="PROSITE" id="PS51198">
    <property type="entry name" value="UVRD_HELICASE_ATP_BIND"/>
    <property type="match status" value="1"/>
</dbReference>
<dbReference type="PROSITE" id="PS51217">
    <property type="entry name" value="UVRD_HELICASE_CTER"/>
    <property type="match status" value="1"/>
</dbReference>
<feature type="chain" id="PRO_0000379149" description="ATP-dependent helicase/deoxyribonuclease subunit B">
    <location>
        <begin position="1"/>
        <end position="1144"/>
    </location>
</feature>
<feature type="domain" description="UvrD-like helicase ATP-binding" evidence="1">
    <location>
        <begin position="1"/>
        <end position="276"/>
    </location>
</feature>
<feature type="domain" description="UvrD-like helicase C-terminal" evidence="1">
    <location>
        <begin position="274"/>
        <end position="584"/>
    </location>
</feature>
<feature type="binding site" evidence="1">
    <location>
        <begin position="8"/>
        <end position="15"/>
    </location>
    <ligand>
        <name>ATP</name>
        <dbReference type="ChEBI" id="CHEBI:30616"/>
    </ligand>
</feature>
<feature type="binding site" evidence="1">
    <location>
        <position position="784"/>
    </location>
    <ligand>
        <name>[4Fe-4S] cluster</name>
        <dbReference type="ChEBI" id="CHEBI:49883"/>
    </ligand>
</feature>
<feature type="binding site" evidence="1">
    <location>
        <position position="1102"/>
    </location>
    <ligand>
        <name>[4Fe-4S] cluster</name>
        <dbReference type="ChEBI" id="CHEBI:49883"/>
    </ligand>
</feature>
<feature type="binding site" evidence="1">
    <location>
        <position position="1105"/>
    </location>
    <ligand>
        <name>[4Fe-4S] cluster</name>
        <dbReference type="ChEBI" id="CHEBI:49883"/>
    </ligand>
</feature>
<feature type="binding site" evidence="1">
    <location>
        <position position="1111"/>
    </location>
    <ligand>
        <name>[4Fe-4S] cluster</name>
        <dbReference type="ChEBI" id="CHEBI:49883"/>
    </ligand>
</feature>
<accession>A8MJ51</accession>
<protein>
    <recommendedName>
        <fullName evidence="1">ATP-dependent helicase/deoxyribonuclease subunit B</fullName>
        <ecNumber evidence="1">3.1.-.-</ecNumber>
    </recommendedName>
    <alternativeName>
        <fullName evidence="1">ATP-dependent helicase/nuclease subunit AddB</fullName>
    </alternativeName>
</protein>
<gene>
    <name evidence="1" type="primary">addB</name>
    <name type="ordered locus">Clos_2300</name>
</gene>